<comment type="function">
    <text evidence="2">Catalyzes the GTP-dependent ribosomal translocation step during translation elongation. During this step, the ribosome changes from the pre-translocational (PRE) to the post-translocational (POST) state as the newly formed A-site-bound peptidyl-tRNA and P-site-bound deacylated tRNA move to the P and E sites, respectively. Catalyzes the coordinated movement of the two tRNA molecules, the mRNA and conformational changes in the ribosome.</text>
</comment>
<comment type="subcellular location">
    <subcellularLocation>
        <location evidence="2">Cytoplasm</location>
    </subcellularLocation>
</comment>
<comment type="similarity">
    <text evidence="2">Belongs to the TRAFAC class translation factor GTPase superfamily. Classic translation factor GTPase family. EF-G/EF-2 subfamily.</text>
</comment>
<accession>Q5HIC8</accession>
<keyword id="KW-0963">Cytoplasm</keyword>
<keyword id="KW-0251">Elongation factor</keyword>
<keyword id="KW-0342">GTP-binding</keyword>
<keyword id="KW-0547">Nucleotide-binding</keyword>
<keyword id="KW-0648">Protein biosynthesis</keyword>
<organism>
    <name type="scientific">Staphylococcus aureus (strain COL)</name>
    <dbReference type="NCBI Taxonomy" id="93062"/>
    <lineage>
        <taxon>Bacteria</taxon>
        <taxon>Bacillati</taxon>
        <taxon>Bacillota</taxon>
        <taxon>Bacilli</taxon>
        <taxon>Bacillales</taxon>
        <taxon>Staphylococcaceae</taxon>
        <taxon>Staphylococcus</taxon>
    </lineage>
</organism>
<protein>
    <recommendedName>
        <fullName evidence="2">Elongation factor G</fullName>
        <shortName evidence="2">EF-G</shortName>
    </recommendedName>
</protein>
<reference key="1">
    <citation type="journal article" date="2005" name="J. Bacteriol.">
        <title>Insights on evolution of virulence and resistance from the complete genome analysis of an early methicillin-resistant Staphylococcus aureus strain and a biofilm-producing methicillin-resistant Staphylococcus epidermidis strain.</title>
        <authorList>
            <person name="Gill S.R."/>
            <person name="Fouts D.E."/>
            <person name="Archer G.L."/>
            <person name="Mongodin E.F."/>
            <person name="DeBoy R.T."/>
            <person name="Ravel J."/>
            <person name="Paulsen I.T."/>
            <person name="Kolonay J.F."/>
            <person name="Brinkac L.M."/>
            <person name="Beanan M.J."/>
            <person name="Dodson R.J."/>
            <person name="Daugherty S.C."/>
            <person name="Madupu R."/>
            <person name="Angiuoli S.V."/>
            <person name="Durkin A.S."/>
            <person name="Haft D.H."/>
            <person name="Vamathevan J.J."/>
            <person name="Khouri H."/>
            <person name="Utterback T.R."/>
            <person name="Lee C."/>
            <person name="Dimitrov G."/>
            <person name="Jiang L."/>
            <person name="Qin H."/>
            <person name="Weidman J."/>
            <person name="Tran K."/>
            <person name="Kang K.H."/>
            <person name="Hance I.R."/>
            <person name="Nelson K.E."/>
            <person name="Fraser C.M."/>
        </authorList>
    </citation>
    <scope>NUCLEOTIDE SEQUENCE [LARGE SCALE GENOMIC DNA]</scope>
    <source>
        <strain>COL</strain>
    </source>
</reference>
<gene>
    <name evidence="2" type="primary">fusA</name>
    <name type="ordered locus">SACOL0593</name>
</gene>
<name>EFG_STAAC</name>
<dbReference type="EMBL" id="CP000046">
    <property type="protein sequence ID" value="AAW37703.1"/>
    <property type="molecule type" value="Genomic_DNA"/>
</dbReference>
<dbReference type="RefSeq" id="WP_000090315.1">
    <property type="nucleotide sequence ID" value="NZ_JBGOFO010000009.1"/>
</dbReference>
<dbReference type="SMR" id="Q5HIC8"/>
<dbReference type="KEGG" id="sac:SACOL0593"/>
<dbReference type="HOGENOM" id="CLU_002794_4_1_9"/>
<dbReference type="Proteomes" id="UP000000530">
    <property type="component" value="Chromosome"/>
</dbReference>
<dbReference type="GO" id="GO:0005737">
    <property type="term" value="C:cytoplasm"/>
    <property type="evidence" value="ECO:0007669"/>
    <property type="project" value="UniProtKB-SubCell"/>
</dbReference>
<dbReference type="GO" id="GO:0005525">
    <property type="term" value="F:GTP binding"/>
    <property type="evidence" value="ECO:0007669"/>
    <property type="project" value="UniProtKB-UniRule"/>
</dbReference>
<dbReference type="GO" id="GO:0003924">
    <property type="term" value="F:GTPase activity"/>
    <property type="evidence" value="ECO:0007669"/>
    <property type="project" value="InterPro"/>
</dbReference>
<dbReference type="GO" id="GO:0003746">
    <property type="term" value="F:translation elongation factor activity"/>
    <property type="evidence" value="ECO:0007669"/>
    <property type="project" value="UniProtKB-UniRule"/>
</dbReference>
<dbReference type="GO" id="GO:0032790">
    <property type="term" value="P:ribosome disassembly"/>
    <property type="evidence" value="ECO:0007669"/>
    <property type="project" value="TreeGrafter"/>
</dbReference>
<dbReference type="CDD" id="cd01886">
    <property type="entry name" value="EF-G"/>
    <property type="match status" value="1"/>
</dbReference>
<dbReference type="CDD" id="cd16262">
    <property type="entry name" value="EFG_III"/>
    <property type="match status" value="1"/>
</dbReference>
<dbReference type="CDD" id="cd01434">
    <property type="entry name" value="EFG_mtEFG1_IV"/>
    <property type="match status" value="1"/>
</dbReference>
<dbReference type="CDD" id="cd03713">
    <property type="entry name" value="EFG_mtEFG_C"/>
    <property type="match status" value="1"/>
</dbReference>
<dbReference type="CDD" id="cd04088">
    <property type="entry name" value="EFG_mtEFG_II"/>
    <property type="match status" value="1"/>
</dbReference>
<dbReference type="FunFam" id="2.40.30.10:FF:000006">
    <property type="entry name" value="Elongation factor G"/>
    <property type="match status" value="1"/>
</dbReference>
<dbReference type="FunFam" id="3.30.230.10:FF:000003">
    <property type="entry name" value="Elongation factor G"/>
    <property type="match status" value="1"/>
</dbReference>
<dbReference type="FunFam" id="3.30.70.240:FF:000001">
    <property type="entry name" value="Elongation factor G"/>
    <property type="match status" value="1"/>
</dbReference>
<dbReference type="FunFam" id="3.30.70.870:FF:000001">
    <property type="entry name" value="Elongation factor G"/>
    <property type="match status" value="1"/>
</dbReference>
<dbReference type="FunFam" id="3.40.50.300:FF:000029">
    <property type="entry name" value="Elongation factor G"/>
    <property type="match status" value="1"/>
</dbReference>
<dbReference type="Gene3D" id="3.30.230.10">
    <property type="match status" value="1"/>
</dbReference>
<dbReference type="Gene3D" id="3.30.70.240">
    <property type="match status" value="1"/>
</dbReference>
<dbReference type="Gene3D" id="3.30.70.870">
    <property type="entry name" value="Elongation Factor G (Translational Gtpase), domain 3"/>
    <property type="match status" value="1"/>
</dbReference>
<dbReference type="Gene3D" id="3.40.50.300">
    <property type="entry name" value="P-loop containing nucleotide triphosphate hydrolases"/>
    <property type="match status" value="1"/>
</dbReference>
<dbReference type="Gene3D" id="2.40.30.10">
    <property type="entry name" value="Translation factors"/>
    <property type="match status" value="1"/>
</dbReference>
<dbReference type="HAMAP" id="MF_00054_B">
    <property type="entry name" value="EF_G_EF_2_B"/>
    <property type="match status" value="1"/>
</dbReference>
<dbReference type="InterPro" id="IPR041095">
    <property type="entry name" value="EFG_II"/>
</dbReference>
<dbReference type="InterPro" id="IPR009022">
    <property type="entry name" value="EFG_III"/>
</dbReference>
<dbReference type="InterPro" id="IPR035647">
    <property type="entry name" value="EFG_III/V"/>
</dbReference>
<dbReference type="InterPro" id="IPR047872">
    <property type="entry name" value="EFG_IV"/>
</dbReference>
<dbReference type="InterPro" id="IPR035649">
    <property type="entry name" value="EFG_V"/>
</dbReference>
<dbReference type="InterPro" id="IPR000640">
    <property type="entry name" value="EFG_V-like"/>
</dbReference>
<dbReference type="InterPro" id="IPR004161">
    <property type="entry name" value="EFTu-like_2"/>
</dbReference>
<dbReference type="InterPro" id="IPR031157">
    <property type="entry name" value="G_TR_CS"/>
</dbReference>
<dbReference type="InterPro" id="IPR027417">
    <property type="entry name" value="P-loop_NTPase"/>
</dbReference>
<dbReference type="InterPro" id="IPR020568">
    <property type="entry name" value="Ribosomal_Su5_D2-typ_SF"/>
</dbReference>
<dbReference type="InterPro" id="IPR014721">
    <property type="entry name" value="Ribsml_uS5_D2-typ_fold_subgr"/>
</dbReference>
<dbReference type="InterPro" id="IPR005225">
    <property type="entry name" value="Small_GTP-bd"/>
</dbReference>
<dbReference type="InterPro" id="IPR000795">
    <property type="entry name" value="T_Tr_GTP-bd_dom"/>
</dbReference>
<dbReference type="InterPro" id="IPR009000">
    <property type="entry name" value="Transl_B-barrel_sf"/>
</dbReference>
<dbReference type="InterPro" id="IPR004540">
    <property type="entry name" value="Transl_elong_EFG/EF2"/>
</dbReference>
<dbReference type="InterPro" id="IPR005517">
    <property type="entry name" value="Transl_elong_EFG/EF2_IV"/>
</dbReference>
<dbReference type="NCBIfam" id="TIGR00484">
    <property type="entry name" value="EF-G"/>
    <property type="match status" value="1"/>
</dbReference>
<dbReference type="NCBIfam" id="NF009379">
    <property type="entry name" value="PRK12740.1-3"/>
    <property type="match status" value="1"/>
</dbReference>
<dbReference type="NCBIfam" id="NF009381">
    <property type="entry name" value="PRK12740.1-5"/>
    <property type="match status" value="1"/>
</dbReference>
<dbReference type="NCBIfam" id="TIGR00231">
    <property type="entry name" value="small_GTP"/>
    <property type="match status" value="1"/>
</dbReference>
<dbReference type="PANTHER" id="PTHR43261:SF1">
    <property type="entry name" value="RIBOSOME-RELEASING FACTOR 2, MITOCHONDRIAL"/>
    <property type="match status" value="1"/>
</dbReference>
<dbReference type="PANTHER" id="PTHR43261">
    <property type="entry name" value="TRANSLATION ELONGATION FACTOR G-RELATED"/>
    <property type="match status" value="1"/>
</dbReference>
<dbReference type="Pfam" id="PF00679">
    <property type="entry name" value="EFG_C"/>
    <property type="match status" value="1"/>
</dbReference>
<dbReference type="Pfam" id="PF14492">
    <property type="entry name" value="EFG_III"/>
    <property type="match status" value="1"/>
</dbReference>
<dbReference type="Pfam" id="PF03764">
    <property type="entry name" value="EFG_IV"/>
    <property type="match status" value="1"/>
</dbReference>
<dbReference type="Pfam" id="PF00009">
    <property type="entry name" value="GTP_EFTU"/>
    <property type="match status" value="1"/>
</dbReference>
<dbReference type="Pfam" id="PF03144">
    <property type="entry name" value="GTP_EFTU_D2"/>
    <property type="match status" value="1"/>
</dbReference>
<dbReference type="PRINTS" id="PR00315">
    <property type="entry name" value="ELONGATNFCT"/>
</dbReference>
<dbReference type="SMART" id="SM00838">
    <property type="entry name" value="EFG_C"/>
    <property type="match status" value="1"/>
</dbReference>
<dbReference type="SMART" id="SM00889">
    <property type="entry name" value="EFG_IV"/>
    <property type="match status" value="1"/>
</dbReference>
<dbReference type="SUPFAM" id="SSF54980">
    <property type="entry name" value="EF-G C-terminal domain-like"/>
    <property type="match status" value="2"/>
</dbReference>
<dbReference type="SUPFAM" id="SSF52540">
    <property type="entry name" value="P-loop containing nucleoside triphosphate hydrolases"/>
    <property type="match status" value="1"/>
</dbReference>
<dbReference type="SUPFAM" id="SSF54211">
    <property type="entry name" value="Ribosomal protein S5 domain 2-like"/>
    <property type="match status" value="1"/>
</dbReference>
<dbReference type="SUPFAM" id="SSF50447">
    <property type="entry name" value="Translation proteins"/>
    <property type="match status" value="1"/>
</dbReference>
<dbReference type="PROSITE" id="PS00301">
    <property type="entry name" value="G_TR_1"/>
    <property type="match status" value="1"/>
</dbReference>
<dbReference type="PROSITE" id="PS51722">
    <property type="entry name" value="G_TR_2"/>
    <property type="match status" value="1"/>
</dbReference>
<feature type="initiator methionine" description="Removed" evidence="1">
    <location>
        <position position="1"/>
    </location>
</feature>
<feature type="chain" id="PRO_0000091214" description="Elongation factor G">
    <location>
        <begin position="2"/>
        <end position="693"/>
    </location>
</feature>
<feature type="domain" description="tr-type G">
    <location>
        <begin position="8"/>
        <end position="282"/>
    </location>
</feature>
<feature type="binding site" evidence="2">
    <location>
        <begin position="17"/>
        <end position="24"/>
    </location>
    <ligand>
        <name>GTP</name>
        <dbReference type="ChEBI" id="CHEBI:37565"/>
    </ligand>
</feature>
<feature type="binding site" evidence="2">
    <location>
        <begin position="81"/>
        <end position="85"/>
    </location>
    <ligand>
        <name>GTP</name>
        <dbReference type="ChEBI" id="CHEBI:37565"/>
    </ligand>
</feature>
<feature type="binding site" evidence="2">
    <location>
        <begin position="135"/>
        <end position="138"/>
    </location>
    <ligand>
        <name>GTP</name>
        <dbReference type="ChEBI" id="CHEBI:37565"/>
    </ligand>
</feature>
<sequence length="693" mass="76612">MAREFSLEKTRNIGIMAHIDAGKTTTTERILYYTGRIHKIGETHEGASQMDWMEQEQDRGITITSAATTAAWEGHRVNIIDTPGHVDFTVEVERSLRVLDGAVTVLDAQSGVEPQTETVWRQATTYGVPRIVFVNKMDKLGANFEYSVSTLHDRLQANAAPIQLPIGAEDEFEAIIDLVEMKCFKYTNDLGTEIEEIEIPEDHLDRAEEARASLIEAVAETSDELMEKYLGDEEISVSELKEAIRQATTNVEFYPVLCGTAFKNKGVQLMLDAVIDYLPSPLDVKPIIGHRASNPEEEVIAKADDSAEFAALAFKVMTDPYVGKLTFFRVYSGTMTSGSYVKNSTKGKRERVGRLLQMHANSRQEIDTVYSGDIAAAVGLKDTGTGDTLCGEKNDIILESMEFPEPVIHLSVEPKSKADQDKMTQALVKLQEEDPTFHAHTDEETGQVIIGGMGELHLDILVDRMKKEFNVECNVGAPMVSYRETFKSSAQVQGKFSRQSGGRGQYGDVHIEFTPNETGAGFEFENAIVGGVVPREYIPSVEAGLKDAMENGVLAGYPLIDVKAKLYDGSYHDVDSSEMAFKIAASLALKEAAKKCDPVILEPMMKVTIEMPEEYMGDIMGDVTSRRGRVDGMEPRGNAQVVNAYVPLSEMFGYATSLRSNTQGRGTYTMYFDHYAEVPKSIAEDIIKKNKGE</sequence>
<evidence type="ECO:0000250" key="1"/>
<evidence type="ECO:0000255" key="2">
    <source>
        <dbReference type="HAMAP-Rule" id="MF_00054"/>
    </source>
</evidence>
<proteinExistence type="inferred from homology"/>